<evidence type="ECO:0000250" key="1">
    <source>
        <dbReference type="UniProtKB" id="P03905"/>
    </source>
</evidence>
<evidence type="ECO:0000250" key="2">
    <source>
        <dbReference type="UniProtKB" id="P03910"/>
    </source>
</evidence>
<evidence type="ECO:0000255" key="3"/>
<evidence type="ECO:0000305" key="4"/>
<dbReference type="EC" id="7.1.1.2" evidence="1"/>
<dbReference type="EMBL" id="DQ316068">
    <property type="protein sequence ID" value="ABC17900.1"/>
    <property type="molecule type" value="Genomic_DNA"/>
</dbReference>
<dbReference type="RefSeq" id="YP_626376.1">
    <property type="nucleotide sequence ID" value="NC_005129.2"/>
</dbReference>
<dbReference type="SMR" id="Q2I3G5"/>
<dbReference type="GeneID" id="2610370"/>
<dbReference type="CTD" id="4538"/>
<dbReference type="GO" id="GO:0005743">
    <property type="term" value="C:mitochondrial inner membrane"/>
    <property type="evidence" value="ECO:0000250"/>
    <property type="project" value="UniProtKB"/>
</dbReference>
<dbReference type="GO" id="GO:0008137">
    <property type="term" value="F:NADH dehydrogenase (ubiquinone) activity"/>
    <property type="evidence" value="ECO:0000250"/>
    <property type="project" value="UniProtKB"/>
</dbReference>
<dbReference type="GO" id="GO:0048039">
    <property type="term" value="F:ubiquinone binding"/>
    <property type="evidence" value="ECO:0007669"/>
    <property type="project" value="TreeGrafter"/>
</dbReference>
<dbReference type="GO" id="GO:0015990">
    <property type="term" value="P:electron transport coupled proton transport"/>
    <property type="evidence" value="ECO:0007669"/>
    <property type="project" value="TreeGrafter"/>
</dbReference>
<dbReference type="GO" id="GO:0006120">
    <property type="term" value="P:mitochondrial electron transport, NADH to ubiquinone"/>
    <property type="evidence" value="ECO:0000250"/>
    <property type="project" value="UniProtKB"/>
</dbReference>
<dbReference type="GO" id="GO:0032981">
    <property type="term" value="P:mitochondrial respiratory chain complex I assembly"/>
    <property type="evidence" value="ECO:0000250"/>
    <property type="project" value="UniProtKB"/>
</dbReference>
<dbReference type="InterPro" id="IPR000260">
    <property type="entry name" value="NADH4_N"/>
</dbReference>
<dbReference type="InterPro" id="IPR010227">
    <property type="entry name" value="NADH_Q_OxRdtase_chainM/4"/>
</dbReference>
<dbReference type="InterPro" id="IPR003918">
    <property type="entry name" value="NADH_UbQ_OxRdtase"/>
</dbReference>
<dbReference type="InterPro" id="IPR001750">
    <property type="entry name" value="ND/Mrp_TM"/>
</dbReference>
<dbReference type="NCBIfam" id="TIGR01972">
    <property type="entry name" value="NDH_I_M"/>
    <property type="match status" value="1"/>
</dbReference>
<dbReference type="PANTHER" id="PTHR43507">
    <property type="entry name" value="NADH-UBIQUINONE OXIDOREDUCTASE CHAIN 4"/>
    <property type="match status" value="1"/>
</dbReference>
<dbReference type="PANTHER" id="PTHR43507:SF20">
    <property type="entry name" value="NADH-UBIQUINONE OXIDOREDUCTASE CHAIN 4"/>
    <property type="match status" value="1"/>
</dbReference>
<dbReference type="Pfam" id="PF01059">
    <property type="entry name" value="Oxidored_q5_N"/>
    <property type="match status" value="1"/>
</dbReference>
<dbReference type="Pfam" id="PF00361">
    <property type="entry name" value="Proton_antipo_M"/>
    <property type="match status" value="1"/>
</dbReference>
<dbReference type="PRINTS" id="PR01437">
    <property type="entry name" value="NUOXDRDTASE4"/>
</dbReference>
<name>NU4M_ELEMA</name>
<keyword id="KW-0249">Electron transport</keyword>
<keyword id="KW-0472">Membrane</keyword>
<keyword id="KW-0496">Mitochondrion</keyword>
<keyword id="KW-0999">Mitochondrion inner membrane</keyword>
<keyword id="KW-0520">NAD</keyword>
<keyword id="KW-0679">Respiratory chain</keyword>
<keyword id="KW-1278">Translocase</keyword>
<keyword id="KW-0812">Transmembrane</keyword>
<keyword id="KW-1133">Transmembrane helix</keyword>
<keyword id="KW-0813">Transport</keyword>
<keyword id="KW-0830">Ubiquinone</keyword>
<feature type="chain" id="PRO_0000232852" description="NADH-ubiquinone oxidoreductase chain 4">
    <location>
        <begin position="1"/>
        <end position="459"/>
    </location>
</feature>
<feature type="transmembrane region" description="Helical" evidence="3">
    <location>
        <begin position="21"/>
        <end position="43"/>
    </location>
</feature>
<feature type="transmembrane region" description="Helical" evidence="3">
    <location>
        <begin position="60"/>
        <end position="80"/>
    </location>
</feature>
<feature type="transmembrane region" description="Helical" evidence="3">
    <location>
        <begin position="99"/>
        <end position="119"/>
    </location>
</feature>
<feature type="transmembrane region" description="Helical" evidence="3">
    <location>
        <begin position="147"/>
        <end position="167"/>
    </location>
</feature>
<feature type="transmembrane region" description="Helical" evidence="3">
    <location>
        <begin position="195"/>
        <end position="215"/>
    </location>
</feature>
<feature type="transmembrane region" description="Helical" evidence="3">
    <location>
        <begin position="224"/>
        <end position="244"/>
    </location>
</feature>
<feature type="transmembrane region" description="Helical" evidence="3">
    <location>
        <begin position="257"/>
        <end position="277"/>
    </location>
</feature>
<feature type="transmembrane region" description="Helical" evidence="3">
    <location>
        <begin position="284"/>
        <end position="303"/>
    </location>
</feature>
<feature type="transmembrane region" description="Helical" evidence="3">
    <location>
        <begin position="308"/>
        <end position="330"/>
    </location>
</feature>
<feature type="transmembrane region" description="Helical" evidence="3">
    <location>
        <begin position="351"/>
        <end position="371"/>
    </location>
</feature>
<feature type="transmembrane region" description="Helical" evidence="3">
    <location>
        <begin position="375"/>
        <end position="395"/>
    </location>
</feature>
<feature type="transmembrane region" description="Helical" evidence="3">
    <location>
        <begin position="436"/>
        <end position="456"/>
    </location>
</feature>
<organism>
    <name type="scientific">Elephas maximus</name>
    <name type="common">Indian elephant</name>
    <dbReference type="NCBI Taxonomy" id="9783"/>
    <lineage>
        <taxon>Eukaryota</taxon>
        <taxon>Metazoa</taxon>
        <taxon>Chordata</taxon>
        <taxon>Craniata</taxon>
        <taxon>Vertebrata</taxon>
        <taxon>Euteleostomi</taxon>
        <taxon>Mammalia</taxon>
        <taxon>Eutheria</taxon>
        <taxon>Afrotheria</taxon>
        <taxon>Proboscidea</taxon>
        <taxon>Elephantidae</taxon>
        <taxon>Elephas</taxon>
    </lineage>
</organism>
<geneLocation type="mitochondrion"/>
<comment type="function">
    <text evidence="1">Core subunit of the mitochondrial membrane respiratory chain NADH dehydrogenase (Complex I) which catalyzes electron transfer from NADH through the respiratory chain, using ubiquinone as an electron acceptor. Essential for the catalytic activity and assembly of complex I.</text>
</comment>
<comment type="catalytic activity">
    <reaction evidence="1">
        <text>a ubiquinone + NADH + 5 H(+)(in) = a ubiquinol + NAD(+) + 4 H(+)(out)</text>
        <dbReference type="Rhea" id="RHEA:29091"/>
        <dbReference type="Rhea" id="RHEA-COMP:9565"/>
        <dbReference type="Rhea" id="RHEA-COMP:9566"/>
        <dbReference type="ChEBI" id="CHEBI:15378"/>
        <dbReference type="ChEBI" id="CHEBI:16389"/>
        <dbReference type="ChEBI" id="CHEBI:17976"/>
        <dbReference type="ChEBI" id="CHEBI:57540"/>
        <dbReference type="ChEBI" id="CHEBI:57945"/>
        <dbReference type="EC" id="7.1.1.2"/>
    </reaction>
</comment>
<comment type="subunit">
    <text evidence="2">Core subunit of respiratory chain NADH dehydrogenase (Complex I) which is composed of 45 different subunits.</text>
</comment>
<comment type="subcellular location">
    <subcellularLocation>
        <location evidence="2">Mitochondrion inner membrane</location>
        <topology evidence="3">Multi-pass membrane protein</topology>
    </subcellularLocation>
</comment>
<comment type="similarity">
    <text evidence="4">Belongs to the complex I subunit 4 family.</text>
</comment>
<protein>
    <recommendedName>
        <fullName>NADH-ubiquinone oxidoreductase chain 4</fullName>
        <ecNumber evidence="1">7.1.1.2</ecNumber>
    </recommendedName>
    <alternativeName>
        <fullName>NADH dehydrogenase subunit 4</fullName>
    </alternativeName>
</protein>
<sequence>MLKTILPTIMLIPLAWFTSNNMVWINTTLYSFAISLASLHLLHQPLDNSLNLSPEFFLDSLSTPLLILTIWLLPLMLIASQAHLSSGSTFQKKSYITTIILLQVSLIMTFAATDLILLYIMFEATLIPTMIIITRWGNQLERLNAGSYFLFYTLMGSLPLLVTLMLIQNTLGSLNLMMLPYLTKSIDNLWSTNMLWLTCTMAFMVKMPLYGLHLWLPKAHVEAPIAGSMVLAAILLKLGGYGMLRITILLDPLTMHMYYPFLMLSLWGMVMTSSICLRQTDMKSLIAYSSVSHMALVIIAIMLQTPWSFMGALTLMIAHGLTSSMLFCLANSNYERIHSRTMILARGLQTLLPLMAAWWLLASLINMAPPPTINLIGELLIITTSFSWSNLTIFPMGLNVLITTMYTLHMMTTTQRGKTSHHAKSIKPSFTRENTLMALHLLPLLLLSLNPKIILGLMY</sequence>
<gene>
    <name type="primary">MT-ND4</name>
    <name type="synonym">MTND4</name>
    <name type="synonym">NADH4</name>
    <name type="synonym">ND4</name>
</gene>
<proteinExistence type="inferred from homology"/>
<accession>Q2I3G5</accession>
<reference key="1">
    <citation type="journal article" date="2006" name="PLoS Biol.">
        <title>Complete mitochondrial genome and phylogeny of Pleistocene mammoth Mammuthus primigenius.</title>
        <authorList>
            <person name="Rogaev E.I."/>
            <person name="Moliaka Y.K."/>
            <person name="Malyarchuk B.A."/>
            <person name="Kondrashov F.A."/>
            <person name="Derenko M.V."/>
            <person name="Chumakov I."/>
            <person name="Grigorenko A.P."/>
        </authorList>
    </citation>
    <scope>NUCLEOTIDE SEQUENCE [GENOMIC DNA]</scope>
    <source>
        <tissue>Blood</tissue>
    </source>
</reference>